<feature type="signal peptide" evidence="12 13 14">
    <location>
        <begin position="1"/>
        <end position="22"/>
    </location>
</feature>
<feature type="chain" id="PRO_0000035307" description="Potassium channel toxin alpha-KTx 1.1" evidence="12 13 14">
    <location>
        <begin position="23"/>
        <end position="59"/>
    </location>
</feature>
<feature type="region of interest" description="Interaction with Ca(2+)-activated K(+) channels" evidence="2">
    <location>
        <begin position="48"/>
        <end position="55"/>
    </location>
</feature>
<feature type="site" description="Basic residue of the functional dyad" evidence="1">
    <location>
        <position position="49"/>
    </location>
</feature>
<feature type="site" description="Aromatic residue of the functional dyad" evidence="1">
    <location>
        <position position="58"/>
    </location>
</feature>
<feature type="modified residue" description="Pyrrolidone carboxylic acid" evidence="12 14">
    <location>
        <position position="23"/>
    </location>
</feature>
<feature type="disulfide bond" evidence="5 6 8 9 10 19">
    <location>
        <begin position="29"/>
        <end position="50"/>
    </location>
</feature>
<feature type="disulfide bond" evidence="5 6 8 9 10 19">
    <location>
        <begin position="35"/>
        <end position="55"/>
    </location>
</feature>
<feature type="disulfide bond" evidence="5 6 8 9 10 19">
    <location>
        <begin position="39"/>
        <end position="57"/>
    </location>
</feature>
<feature type="helix" evidence="27">
    <location>
        <begin position="32"/>
        <end position="34"/>
    </location>
</feature>
<feature type="helix" evidence="27">
    <location>
        <begin position="36"/>
        <end position="42"/>
    </location>
</feature>
<feature type="strand" evidence="26">
    <location>
        <begin position="48"/>
        <end position="50"/>
    </location>
</feature>
<feature type="strand" evidence="25">
    <location>
        <begin position="52"/>
        <end position="55"/>
    </location>
</feature>
<dbReference type="PIR" id="A28202">
    <property type="entry name" value="A60963"/>
</dbReference>
<dbReference type="PDB" id="1BAH">
    <property type="method" value="NMR"/>
    <property type="chains" value="A=24-59"/>
</dbReference>
<dbReference type="PDB" id="1CMR">
    <property type="method" value="NMR"/>
    <property type="chains" value="A=29-59"/>
</dbReference>
<dbReference type="PDB" id="2A9H">
    <property type="method" value="NMR"/>
    <property type="chains" value="E=24-59"/>
</dbReference>
<dbReference type="PDB" id="2CRD">
    <property type="method" value="NMR"/>
    <property type="chains" value="A=24-59"/>
</dbReference>
<dbReference type="PDB" id="4JTA">
    <property type="method" value="X-ray"/>
    <property type="resolution" value="2.50 A"/>
    <property type="chains" value="Y=23-59"/>
</dbReference>
<dbReference type="PDB" id="4JTC">
    <property type="method" value="X-ray"/>
    <property type="resolution" value="2.56 A"/>
    <property type="chains" value="Y=23-59"/>
</dbReference>
<dbReference type="PDB" id="4JTD">
    <property type="method" value="X-ray"/>
    <property type="resolution" value="2.54 A"/>
    <property type="chains" value="Y=23-59"/>
</dbReference>
<dbReference type="PDBsum" id="1BAH"/>
<dbReference type="PDBsum" id="1CMR"/>
<dbReference type="PDBsum" id="2A9H"/>
<dbReference type="PDBsum" id="2CRD"/>
<dbReference type="PDBsum" id="4JTA"/>
<dbReference type="PDBsum" id="4JTC"/>
<dbReference type="PDBsum" id="4JTD"/>
<dbReference type="BMRB" id="P13487"/>
<dbReference type="SMR" id="P13487"/>
<dbReference type="EvolutionaryTrace" id="P13487"/>
<dbReference type="GO" id="GO:0005576">
    <property type="term" value="C:extracellular region"/>
    <property type="evidence" value="ECO:0007669"/>
    <property type="project" value="UniProtKB-SubCell"/>
</dbReference>
<dbReference type="GO" id="GO:0008200">
    <property type="term" value="F:ion channel inhibitor activity"/>
    <property type="evidence" value="ECO:0007669"/>
    <property type="project" value="InterPro"/>
</dbReference>
<dbReference type="GO" id="GO:0015459">
    <property type="term" value="F:potassium channel regulator activity"/>
    <property type="evidence" value="ECO:0007669"/>
    <property type="project" value="UniProtKB-KW"/>
</dbReference>
<dbReference type="GO" id="GO:0090729">
    <property type="term" value="F:toxin activity"/>
    <property type="evidence" value="ECO:0007669"/>
    <property type="project" value="UniProtKB-KW"/>
</dbReference>
<dbReference type="GO" id="GO:0042742">
    <property type="term" value="P:defense response to bacterium"/>
    <property type="evidence" value="ECO:0007669"/>
    <property type="project" value="UniProtKB-KW"/>
</dbReference>
<dbReference type="GO" id="GO:0050832">
    <property type="term" value="P:defense response to fungus"/>
    <property type="evidence" value="ECO:0007669"/>
    <property type="project" value="UniProtKB-KW"/>
</dbReference>
<dbReference type="GO" id="GO:0031640">
    <property type="term" value="P:killing of cells of another organism"/>
    <property type="evidence" value="ECO:0007669"/>
    <property type="project" value="UniProtKB-KW"/>
</dbReference>
<dbReference type="Gene3D" id="3.30.30.10">
    <property type="entry name" value="Knottin, scorpion toxin-like"/>
    <property type="match status" value="1"/>
</dbReference>
<dbReference type="InterPro" id="IPR036574">
    <property type="entry name" value="Scorpion_toxin-like_sf"/>
</dbReference>
<dbReference type="InterPro" id="IPR001947">
    <property type="entry name" value="Scorpion_toxinS_K_inh"/>
</dbReference>
<dbReference type="Pfam" id="PF00451">
    <property type="entry name" value="Toxin_2"/>
    <property type="match status" value="1"/>
</dbReference>
<dbReference type="PRINTS" id="PR00286">
    <property type="entry name" value="CHARYBDTOXIN"/>
</dbReference>
<dbReference type="SUPFAM" id="SSF57095">
    <property type="entry name" value="Scorpion toxin-like"/>
    <property type="match status" value="1"/>
</dbReference>
<dbReference type="PROSITE" id="PS01138">
    <property type="entry name" value="SCORP_SHORT_TOXIN"/>
    <property type="match status" value="1"/>
</dbReference>
<name>KAX11_LEIHE</name>
<reference key="1">
    <citation type="journal article" date="1999" name="J. Mol. Evol.">
        <title>Dynamic diversification from a putative common ancestor of scorpion toxins affecting sodium, potassium, and chloride channels.</title>
        <authorList>
            <person name="Froy O."/>
            <person name="Sagiv T."/>
            <person name="Poreh M."/>
            <person name="Urbach D."/>
            <person name="Zilberberg N."/>
            <person name="Gurevitz M."/>
        </authorList>
    </citation>
    <scope>NUCLEOTIDE SEQUENCE [GENOMIC DNA]</scope>
    <source>
        <tissue>Single abdominal segment</tissue>
    </source>
</reference>
<reference key="2">
    <citation type="journal article" date="1988" name="Proc. Natl. Acad. Sci. U.S.A.">
        <title>Purification, sequence, and model structure of charybdotoxin, a potent selective inhibitor of calcium-activated potassium channels.</title>
        <authorList>
            <person name="Gimenez-Gallego G."/>
            <person name="Navia M.A."/>
            <person name="Reuben J.P."/>
            <person name="Katz G.M."/>
            <person name="Kaczorowski G.J."/>
            <person name="Garcia M.L."/>
        </authorList>
    </citation>
    <scope>PROTEIN SEQUENCE OF 23-59</scope>
    <scope>PYROGLUTAMATE FORMATION AT GLN-23</scope>
    <scope>SUBCELLULAR LOCATION</scope>
</reference>
<reference key="3">
    <citation type="journal article" date="1989" name="Biochemistry">
        <title>Charybdotoxin is a new member of the K+ channel toxin family that includes dendrotoxin I and mast cell degranulating peptide.</title>
        <authorList>
            <person name="Schweitz H."/>
            <person name="Bidard J.-N."/>
            <person name="Maes P."/>
            <person name="Lazdunski M."/>
        </authorList>
    </citation>
    <scope>PROTEIN SEQUENCE OF 23-59</scope>
    <scope>PYROGLUTAMATE FORMATION AT GLN-23</scope>
</reference>
<reference key="4">
    <citation type="journal article" date="1989" name="J. Membr. Biol.">
        <title>Analysis of the blocking activity of charybdotoxin homologs and iodinated derivatives against Ca2+-activated K+ channels.</title>
        <authorList>
            <person name="Lucchesi K."/>
            <person name="Ravindran A."/>
            <person name="Young H."/>
            <person name="Moczydlowski E."/>
        </authorList>
    </citation>
    <scope>PROTEIN SEQUENCE OF 23-59</scope>
    <scope>FUNCTION</scope>
    <scope>PYROGLUTAMATE FORMATION AT GLN23</scope>
    <source>
        <tissue>Venom</tissue>
    </source>
</reference>
<reference key="5">
    <citation type="journal article" date="1990" name="Biochem. Biophys. Res. Commun.">
        <title>Solution synthesis of charybdotoxin (ChTX), a K+ channel blocker.</title>
        <authorList>
            <person name="Lambert P."/>
            <person name="Kuroda H."/>
            <person name="Chino N."/>
            <person name="Watanabe T.X."/>
            <person name="Kimura T."/>
            <person name="Sakakibara S."/>
        </authorList>
    </citation>
    <scope>SYNTHESIS OF 23-59</scope>
</reference>
<reference key="6">
    <citation type="journal article" date="1990" name="J. Biol. Chem.">
        <title>Synthesis and structural characterization of charybdotoxin, a potent peptidyl inhibitor of the high conductance Ca2(+)-activated K+ channel.</title>
        <authorList>
            <person name="Sugg E.E."/>
            <person name="Garcia M.L."/>
            <person name="Reuben J.P."/>
            <person name="Patchett A.A."/>
            <person name="Kaczorowski G.J."/>
        </authorList>
    </citation>
    <scope>SYNTHESIS OF 23-59</scope>
    <scope>DISULFIDE BONDS</scope>
</reference>
<reference key="7">
    <citation type="journal article" date="1994" name="Biochemistry">
        <title>Purification and characterization of three inhibitors of voltage-dependent K+ channels from Leiurus quinquestriatus var. hebraeus venom.</title>
        <authorList>
            <person name="Garcia M.L."/>
            <person name="Garcia-Calvo M."/>
            <person name="Hidalgo P."/>
            <person name="Lee A."/>
            <person name="Mackinnon R."/>
        </authorList>
    </citation>
    <scope>FUNCTION</scope>
</reference>
<reference key="8">
    <citation type="journal article" date="1994" name="Mol. Pharmacol.">
        <title>Pharmacological characterization of five cloned voltage-gated K+ channels, types Kv1.1, 1.2, 1.3, 1.5, and 3.1, stably expressed in mammalian cell lines.</title>
        <authorList>
            <person name="Grissmer S."/>
            <person name="Nguyen A.N."/>
            <person name="Aiyar J."/>
            <person name="Hanson D.C."/>
            <person name="Mather R.J."/>
            <person name="Gutman G.A."/>
            <person name="Karmilowicz M.J."/>
            <person name="Auperin D.D."/>
            <person name="Chandy K.G."/>
        </authorList>
    </citation>
    <scope>FUNCTION</scope>
</reference>
<reference key="9">
    <citation type="journal article" date="2003" name="Biophys. J.">
        <title>BeKm-1 is a HERG-specific toxin that shares the structure with ChTx but the mechanism of action with ErgTx1.</title>
        <authorList>
            <person name="Zhang M."/>
            <person name="Korolkova Y.V."/>
            <person name="Liu J."/>
            <person name="Jiang M."/>
            <person name="Grishin E.V."/>
            <person name="Tseng G.N."/>
        </authorList>
    </citation>
    <scope>FUNCTION</scope>
</reference>
<reference key="10">
    <citation type="journal article" date="2003" name="Mol. Pharmacol.">
        <title>Maurotoxin: a potent inhibitor of intermediate conductance Ca2+-activated potassium channels.</title>
        <authorList>
            <person name="Castle N.A."/>
            <person name="London D.O."/>
            <person name="Creech C."/>
            <person name="Fajloun Z."/>
            <person name="Stocker J.W."/>
            <person name="Sabatier J.-M."/>
        </authorList>
    </citation>
    <scope>FUNCTION</scope>
</reference>
<reference key="11">
    <citation type="journal article" date="2004" name="Proc. Natl. Acad. Sci. U.S.A.">
        <title>Multidimensional signatures in antimicrobial peptides.</title>
        <authorList>
            <person name="Yount N.Y."/>
            <person name="Yeaman M.R."/>
        </authorList>
    </citation>
    <scope>FUNCTION</scope>
</reference>
<reference key="12">
    <citation type="journal article" date="2009" name="Proc. Natl. Acad. Sci. U.S.A.">
        <title>A designer ligand specific for Kv1.3 channels from a scorpion neurotoxin-based library.</title>
        <authorList>
            <person name="Takacs Z."/>
            <person name="Toups M."/>
            <person name="Kollewe A."/>
            <person name="Johnson E."/>
            <person name="Cuello L.G."/>
            <person name="Driessens G."/>
            <person name="Biancalana M."/>
            <person name="Koide A."/>
            <person name="Ponte C.G."/>
            <person name="Perozo E."/>
            <person name="Gajewski T.F."/>
            <person name="Suarez-Kurtz G."/>
            <person name="Koide S."/>
            <person name="Goldstein S.A."/>
        </authorList>
    </citation>
    <scope>FUNCTION</scope>
</reference>
<reference key="13">
    <citation type="journal article" date="2016" name="J. Biol. Chem.">
        <title>Scorpion potassium channel-blocking defensin highlights a functional link with neurotoxin.</title>
        <authorList>
            <person name="Meng L."/>
            <person name="Xie Z."/>
            <person name="Zhang Q."/>
            <person name="Li Y."/>
            <person name="Yang F."/>
            <person name="Chen Z."/>
            <person name="Li W."/>
            <person name="Cao Z."/>
            <person name="Wu Y."/>
        </authorList>
    </citation>
    <scope>FUNCTION</scope>
</reference>
<reference key="14">
    <citation type="journal article" date="2019" name="FEBS Lett.">
        <title>Scorpion toxins interact with nicotinic acetylcholine receptors.</title>
        <authorList>
            <person name="Kasheverov I.E."/>
            <person name="Oparin P.B."/>
            <person name="Zhmak M.N."/>
            <person name="Egorova N.S."/>
            <person name="Ivanov I.A."/>
            <person name="Gigolaev A.M."/>
            <person name="Nekrasova O.V."/>
            <person name="Serebryakova M.V."/>
            <person name="Kudryavtsev D.S."/>
            <person name="Prokopev N.A."/>
            <person name="Hoang A.N."/>
            <person name="Tsetlin V.I."/>
            <person name="Vassilevski A.A."/>
            <person name="Utkin Y.N."/>
        </authorList>
    </citation>
    <scope>FUNCTION</scope>
    <scope>RECOMBINANT EXPRESSION</scope>
</reference>
<reference key="15">
    <citation type="journal article" date="1990" name="Science">
        <title>Molecular structure of charybdotoxin, a pore-directed inhibitor of potassium ion channels.</title>
        <authorList>
            <person name="Massefski W. Jr."/>
            <person name="Redfield A.G."/>
            <person name="Hare D.R."/>
            <person name="Miller C."/>
        </authorList>
    </citation>
    <scope>RETRACTED PAPER</scope>
</reference>
<reference key="16">
    <citation type="journal article" date="1991" name="Science">
        <authorList>
            <person name="Massefski W. Jr."/>
            <person name="Redfield A.G."/>
            <person name="Hare D.R."/>
            <person name="Miller C."/>
        </authorList>
    </citation>
    <scope>RETRACTION NOTICE OF PUBMED:1696395</scope>
</reference>
<reference key="17">
    <citation type="journal article" date="1991" name="Eur. J. Biochem.">
        <title>Three-dimensional structure of natural charybdotoxin in aqueous solution by 1H-NMR. Charybdotoxin possesses a structural motif found in other scorpion toxins.</title>
        <authorList>
            <person name="Bontems F."/>
            <person name="Roumestand C."/>
            <person name="Boyot P."/>
            <person name="Gilquin B."/>
            <person name="Doljansky Y."/>
        </authorList>
    </citation>
    <scope>STRUCTURE BY NMR OF 23-59</scope>
    <scope>DISULFIDE BONDS</scope>
</reference>
<reference key="18">
    <citation type="journal article" date="1991" name="Science">
        <title>Refined structure of charybdotoxin: common motifs in scorpion toxins and insect defensins.</title>
        <authorList>
            <person name="Bontems F."/>
            <person name="Roumestand C."/>
            <person name="Gilquin B."/>
            <person name="Menez A."/>
            <person name="Toma F."/>
        </authorList>
    </citation>
    <scope>STRUCTURE BY NMR OF 23-59</scope>
    <scope>DISULFIDE BONDS</scope>
</reference>
<reference key="19">
    <citation type="journal article" date="1992" name="Biochemistry">
        <title>Analysis of side-chain organization on a refined model of charybdotoxin: structural and functional implications.</title>
        <authorList>
            <person name="Bontems F."/>
            <person name="Gilquin B."/>
            <person name="Roumestand C."/>
            <person name="Menez A."/>
            <person name="Toma F."/>
        </authorList>
    </citation>
    <scope>STRUCTURE BY NMR OF 23-59</scope>
    <scope>DISULFIDE BONDS</scope>
</reference>
<reference key="20">
    <citation type="journal article" date="1992" name="Biochimie">
        <title>Progress in multidimensional NMR investigations of peptide and protein 3-D structures in solution. From structure to functional aspects.</title>
        <authorList>
            <person name="Bonmatin J.-M."/>
            <person name="Genest M."/>
            <person name="Petit M.-C."/>
            <person name="Gincel E."/>
            <person name="Simorre J.-P."/>
            <person name="Cornet B."/>
            <person name="Gallet X."/>
            <person name="Caille A."/>
            <person name="Labbe H."/>
            <person name="Vovelle F."/>
            <person name="Ptak M."/>
        </authorList>
    </citation>
    <scope>STRUCTURE BY NMR OF 23-59</scope>
    <scope>DISULFIDE BONDS</scope>
</reference>
<reference key="21">
    <citation type="journal article" date="1997" name="Biochemistry">
        <title>NMR solution structure of a two-disulfide derivative of charybdotoxin: structural evidence for conservation of scorpion toxin alpha/beta motif and its hydrophobic side chain packing.</title>
        <authorList>
            <person name="Song J."/>
            <person name="Gilquin B."/>
            <person name="Jamin N."/>
            <person name="Drakopoulou E."/>
            <person name="Guenneugues M."/>
            <person name="Dauplais M."/>
            <person name="Vita C."/>
            <person name="Menez A."/>
        </authorList>
    </citation>
    <scope>STRUCTURE BY NMR OF 23-59</scope>
    <scope>DOMAIN</scope>
    <scope>DISULFIDE BONDS</scope>
</reference>
<evidence type="ECO:0000250" key="1"/>
<evidence type="ECO:0000255" key="2"/>
<evidence type="ECO:0000269" key="3">
    <source>
    </source>
</evidence>
<evidence type="ECO:0000269" key="4">
    <source>
    </source>
</evidence>
<evidence type="ECO:0000269" key="5">
    <source>
    </source>
</evidence>
<evidence type="ECO:0000269" key="6">
    <source>
    </source>
</evidence>
<evidence type="ECO:0000269" key="7">
    <source>
    </source>
</evidence>
<evidence type="ECO:0000269" key="8">
    <source>
    </source>
</evidence>
<evidence type="ECO:0000269" key="9">
    <source>
    </source>
</evidence>
<evidence type="ECO:0000269" key="10">
    <source>
    </source>
</evidence>
<evidence type="ECO:0000269" key="11">
    <source>
    </source>
</evidence>
<evidence type="ECO:0000269" key="12">
    <source>
    </source>
</evidence>
<evidence type="ECO:0000269" key="13">
    <source>
    </source>
</evidence>
<evidence type="ECO:0000269" key="14">
    <source>
    </source>
</evidence>
<evidence type="ECO:0000269" key="15">
    <source>
    </source>
</evidence>
<evidence type="ECO:0000269" key="16">
    <source>
    </source>
</evidence>
<evidence type="ECO:0000269" key="17">
    <source>
    </source>
</evidence>
<evidence type="ECO:0000269" key="18">
    <source>
    </source>
</evidence>
<evidence type="ECO:0000269" key="19">
    <source>
    </source>
</evidence>
<evidence type="ECO:0000303" key="20">
    <source>
    </source>
</evidence>
<evidence type="ECO:0000303" key="21">
    <source>
    </source>
</evidence>
<evidence type="ECO:0000303" key="22">
    <source>
    </source>
</evidence>
<evidence type="ECO:0000305" key="23"/>
<evidence type="ECO:0000305" key="24">
    <source>
    </source>
</evidence>
<evidence type="ECO:0007829" key="25">
    <source>
        <dbReference type="PDB" id="1BAH"/>
    </source>
</evidence>
<evidence type="ECO:0007829" key="26">
    <source>
        <dbReference type="PDB" id="2CRD"/>
    </source>
</evidence>
<evidence type="ECO:0007829" key="27">
    <source>
        <dbReference type="PDB" id="4JTA"/>
    </source>
</evidence>
<accession>P13487</accession>
<comment type="function">
    <text evidence="3 7 11 13 16 17 18">This toxin inhibits numerous potassium channels: shaker (Ki=227 nM), Kv1.2/KCNA2 (nanomolar range), Kv1.3/KCNA3 (nanomolar range), Kv1.5/KCNA5 (Kd&gt;100 nM), Kv1.6/KCNA6 (Ki=22 nM), KCa1.1/KCNMA1 (IC(50)=5.9 nM). It blocks channel activity by a simple bimolecular inhibition process. It also shows a weak interaction with nicotinic acetylcholine receptors (nAChR), suggesting it may weakly inhibit it (PubMed:31276191). It also exhibits pH-specific antimicrobial activities against bacteria (B.subtilis, E.coli and S.aureus) and the fungus C.albicans (PubMed:15118082).</text>
</comment>
<comment type="subcellular location">
    <subcellularLocation>
        <location evidence="12">Secreted</location>
    </subcellularLocation>
</comment>
<comment type="tissue specificity">
    <text evidence="24">Expressed by the venom gland.</text>
</comment>
<comment type="domain">
    <text evidence="19">Has the structural arrangement of an alpha-helix connected to a beta-sheet by disulfide bonds (CSalpha/beta).</text>
</comment>
<comment type="miscellaneous">
    <text evidence="3 4 11 15 17 18">Negative results: does not or very weakly inhibits Kv1.1/KCNA1, Kv2.1/KCNB1 (Ki&gt;2 uM), Kv3.1/KCNC1 (Kd&gt;1 uM), Kv11.1/KCNH2, KCa2.1/KCNN1 (IC(50)&gt; 1 uM), KCa2.2/ KCNN2 (IC(50)&gt; 1 uM), KCa2.3/ KCNN3 (IC(50)&gt; 1 uM) (PubMed:12527813, PubMed:12719233, PubMed:20007782, PubMed:7517498, PubMed:8204618). Does not inhibit the growth of Gram-positive and Gram-negative bacteria (PubMed:26817841).</text>
</comment>
<comment type="similarity">
    <text evidence="23">Belongs to the short scorpion toxin superfamily. Potassium channel inhibitor family. Alpha-KTx 01 subfamily.</text>
</comment>
<organism>
    <name type="scientific">Leiurus hebraeus</name>
    <name type="common">Hebrew deathstalker scorpion</name>
    <name type="synonym">Leiurus quinquestriatus hebraeus</name>
    <dbReference type="NCBI Taxonomy" id="2899558"/>
    <lineage>
        <taxon>Eukaryota</taxon>
        <taxon>Metazoa</taxon>
        <taxon>Ecdysozoa</taxon>
        <taxon>Arthropoda</taxon>
        <taxon>Chelicerata</taxon>
        <taxon>Arachnida</taxon>
        <taxon>Scorpiones</taxon>
        <taxon>Buthida</taxon>
        <taxon>Buthoidea</taxon>
        <taxon>Buthidae</taxon>
        <taxon>Leiurus</taxon>
    </lineage>
</organism>
<keyword id="KW-0002">3D-structure</keyword>
<keyword id="KW-0044">Antibiotic</keyword>
<keyword id="KW-0929">Antimicrobial</keyword>
<keyword id="KW-1221">Calcium-activated potassium channel impairing toxin</keyword>
<keyword id="KW-0903">Direct protein sequencing</keyword>
<keyword id="KW-1015">Disulfide bond</keyword>
<keyword id="KW-0295">Fungicide</keyword>
<keyword id="KW-0872">Ion channel impairing toxin</keyword>
<keyword id="KW-0528">Neurotoxin</keyword>
<keyword id="KW-0632">Potassium channel impairing toxin</keyword>
<keyword id="KW-0873">Pyrrolidone carboxylic acid</keyword>
<keyword id="KW-0964">Secreted</keyword>
<keyword id="KW-0732">Signal</keyword>
<keyword id="KW-0800">Toxin</keyword>
<keyword id="KW-1220">Voltage-gated potassium channel impairing toxin</keyword>
<sequence>MKILSVLLLALIICSIVGWSEAQFTNVSCTTSKECWSVCQRLHNTSRGKCMNKKCRCYS</sequence>
<proteinExistence type="evidence at protein level"/>
<protein>
    <recommendedName>
        <fullName>Potassium channel toxin alpha-KTx 1.1</fullName>
    </recommendedName>
    <alternativeName>
        <fullName evidence="22">ChTX-Lq1</fullName>
    </alternativeName>
    <alternativeName>
        <fullName>ChTx-a</fullName>
    </alternativeName>
    <alternativeName>
        <fullName evidence="21">Charybdotoxin</fullName>
        <shortName evidence="20">CTX</shortName>
        <shortName evidence="21">ChTX</shortName>
    </alternativeName>
</protein>